<comment type="catalytic activity">
    <reaction>
        <text>D-tagatofuranose 1,6-bisphosphate = D-glyceraldehyde 3-phosphate + dihydroxyacetone phosphate</text>
        <dbReference type="Rhea" id="RHEA:22948"/>
        <dbReference type="ChEBI" id="CHEBI:57642"/>
        <dbReference type="ChEBI" id="CHEBI:58694"/>
        <dbReference type="ChEBI" id="CHEBI:59776"/>
        <dbReference type="EC" id="4.1.2.40"/>
    </reaction>
</comment>
<comment type="pathway">
    <text>Carbohydrate metabolism; D-tagatose 6-phosphate degradation; D-glyceraldehyde 3-phosphate and glycerone phosphate from D-tagatose 6-phosphate: step 2/2.</text>
</comment>
<comment type="similarity">
    <text evidence="1">Belongs to the aldolase LacD family.</text>
</comment>
<keyword id="KW-0423">Lactose metabolism</keyword>
<keyword id="KW-0456">Lyase</keyword>
<name>LACD1_STRPQ</name>
<gene>
    <name type="primary">lacD1</name>
    <name type="synonym">lacD.1</name>
    <name type="ordered locus">SPs0385</name>
</gene>
<proteinExistence type="inferred from homology"/>
<feature type="chain" id="PRO_0000411395" description="Tagatose 1,6-diphosphate aldolase 1">
    <location>
        <begin position="1"/>
        <end position="325"/>
    </location>
</feature>
<organism>
    <name type="scientific">Streptococcus pyogenes serotype M3 (strain SSI-1)</name>
    <dbReference type="NCBI Taxonomy" id="193567"/>
    <lineage>
        <taxon>Bacteria</taxon>
        <taxon>Bacillati</taxon>
        <taxon>Bacillota</taxon>
        <taxon>Bacilli</taxon>
        <taxon>Lactobacillales</taxon>
        <taxon>Streptococcaceae</taxon>
        <taxon>Streptococcus</taxon>
    </lineage>
</organism>
<sequence length="325" mass="35983">MTITANKRHYLEKVSHQGIISALAFDQRGALKQMMAAHQEGEATVTQIETLKVLVSEELTPYASSILLDPEYGLLATKVKANQTGLLLAYEKTGYDATTTSRLPDCLVEWSVKRLKAAGADAIKFLLYYDVDGDEQINLQKQAYIERIGSECTAEDIPFFLELLSYDERISDNNSAAYAKLKPHKVNGAMSVFSDKRFGVDVLKVEVPVNMAYVEGFTEGEVHYSQAEAIKAFQDQEAASHLPYIYLSAGVSAKLFQETLYFAAAAGAQFSGVLCGRATWAGSVPVYITKGEDEARKWLCTEGFQNIDELNRVLEETASPWTEKI</sequence>
<dbReference type="EC" id="4.1.2.40"/>
<dbReference type="EMBL" id="BA000034">
    <property type="protein sequence ID" value="BAC63480.1"/>
    <property type="molecule type" value="Genomic_DNA"/>
</dbReference>
<dbReference type="SMR" id="P0DC15"/>
<dbReference type="KEGG" id="sps:SPs0385"/>
<dbReference type="HOGENOM" id="CLU_058971_0_1_9"/>
<dbReference type="UniPathway" id="UPA00704">
    <property type="reaction ID" value="UER00716"/>
</dbReference>
<dbReference type="GO" id="GO:0061595">
    <property type="term" value="F:6-deoxy-6-sulfofructose-1-phosphate aldolase activity"/>
    <property type="evidence" value="ECO:0007669"/>
    <property type="project" value="TreeGrafter"/>
</dbReference>
<dbReference type="GO" id="GO:0009024">
    <property type="term" value="F:tagatose-6-phosphate kinase activity"/>
    <property type="evidence" value="ECO:0007669"/>
    <property type="project" value="InterPro"/>
</dbReference>
<dbReference type="GO" id="GO:0009025">
    <property type="term" value="F:tagatose-bisphosphate aldolase activity"/>
    <property type="evidence" value="ECO:0007669"/>
    <property type="project" value="UniProtKB-UniRule"/>
</dbReference>
<dbReference type="GO" id="GO:1902777">
    <property type="term" value="P:6-sulfoquinovose(1-) catabolic process"/>
    <property type="evidence" value="ECO:0007669"/>
    <property type="project" value="TreeGrafter"/>
</dbReference>
<dbReference type="GO" id="GO:2001059">
    <property type="term" value="P:D-tagatose 6-phosphate catabolic process"/>
    <property type="evidence" value="ECO:0007669"/>
    <property type="project" value="UniProtKB-UniRule"/>
</dbReference>
<dbReference type="GO" id="GO:0019512">
    <property type="term" value="P:lactose catabolic process via tagatose-6-phosphate"/>
    <property type="evidence" value="ECO:0007669"/>
    <property type="project" value="InterPro"/>
</dbReference>
<dbReference type="FunFam" id="3.20.20.70:FF:000137">
    <property type="entry name" value="Tagatose 1,6-diphosphate aldolase 2"/>
    <property type="match status" value="1"/>
</dbReference>
<dbReference type="Gene3D" id="3.20.20.70">
    <property type="entry name" value="Aldolase class I"/>
    <property type="match status" value="1"/>
</dbReference>
<dbReference type="HAMAP" id="MF_00734">
    <property type="entry name" value="LacD"/>
    <property type="match status" value="1"/>
</dbReference>
<dbReference type="InterPro" id="IPR013785">
    <property type="entry name" value="Aldolase_TIM"/>
</dbReference>
<dbReference type="InterPro" id="IPR002915">
    <property type="entry name" value="DeoC/FbaB/LacD_aldolase"/>
</dbReference>
<dbReference type="InterPro" id="IPR050552">
    <property type="entry name" value="LacD_aldolase"/>
</dbReference>
<dbReference type="InterPro" id="IPR005927">
    <property type="entry name" value="Tag_1.6-dipho_adolase"/>
</dbReference>
<dbReference type="NCBIfam" id="TIGR01232">
    <property type="entry name" value="lacD"/>
    <property type="match status" value="1"/>
</dbReference>
<dbReference type="NCBIfam" id="NF003180">
    <property type="entry name" value="PRK04161.1"/>
    <property type="match status" value="1"/>
</dbReference>
<dbReference type="NCBIfam" id="NF009065">
    <property type="entry name" value="PRK12399.1"/>
    <property type="match status" value="1"/>
</dbReference>
<dbReference type="NCBIfam" id="NF009498">
    <property type="entry name" value="PRK12858.1"/>
    <property type="match status" value="1"/>
</dbReference>
<dbReference type="PANTHER" id="PTHR39340">
    <property type="entry name" value="SULFOFRUCTOSEPHOSPHATE ALDOLASE"/>
    <property type="match status" value="1"/>
</dbReference>
<dbReference type="PANTHER" id="PTHR39340:SF1">
    <property type="entry name" value="SULFOFRUCTOSEPHOSPHATE ALDOLASE"/>
    <property type="match status" value="1"/>
</dbReference>
<dbReference type="Pfam" id="PF01791">
    <property type="entry name" value="DeoC"/>
    <property type="match status" value="1"/>
</dbReference>
<dbReference type="SMART" id="SM01133">
    <property type="entry name" value="DeoC"/>
    <property type="match status" value="1"/>
</dbReference>
<dbReference type="SUPFAM" id="SSF51569">
    <property type="entry name" value="Aldolase"/>
    <property type="match status" value="1"/>
</dbReference>
<protein>
    <recommendedName>
        <fullName>Tagatose 1,6-diphosphate aldolase 1</fullName>
        <ecNumber>4.1.2.40</ecNumber>
    </recommendedName>
    <alternativeName>
        <fullName>D-tagatose-1,6-bisphosphate aldolase 1</fullName>
    </alternativeName>
    <alternativeName>
        <fullName>Tagatose-bisphosphate aldolase 1</fullName>
    </alternativeName>
</protein>
<reference key="1">
    <citation type="journal article" date="2003" name="Genome Res.">
        <title>Genome sequence of an M3 strain of Streptococcus pyogenes reveals a large-scale genomic rearrangement in invasive strains and new insights into phage evolution.</title>
        <authorList>
            <person name="Nakagawa I."/>
            <person name="Kurokawa K."/>
            <person name="Yamashita A."/>
            <person name="Nakata M."/>
            <person name="Tomiyasu Y."/>
            <person name="Okahashi N."/>
            <person name="Kawabata S."/>
            <person name="Yamazaki K."/>
            <person name="Shiba T."/>
            <person name="Yasunaga T."/>
            <person name="Hayashi H."/>
            <person name="Hattori M."/>
            <person name="Hamada S."/>
        </authorList>
    </citation>
    <scope>NUCLEOTIDE SEQUENCE [LARGE SCALE GENOMIC DNA]</scope>
    <source>
        <strain>SSI-1</strain>
    </source>
</reference>
<evidence type="ECO:0000305" key="1"/>
<accession>P0DC15</accession>
<accession>Q879I5</accession>
<accession>Q8K654</accession>